<reference key="1">
    <citation type="journal article" date="2002" name="Nature">
        <title>Complete genome sequence of the model actinomycete Streptomyces coelicolor A3(2).</title>
        <authorList>
            <person name="Bentley S.D."/>
            <person name="Chater K.F."/>
            <person name="Cerdeno-Tarraga A.-M."/>
            <person name="Challis G.L."/>
            <person name="Thomson N.R."/>
            <person name="James K.D."/>
            <person name="Harris D.E."/>
            <person name="Quail M.A."/>
            <person name="Kieser H."/>
            <person name="Harper D."/>
            <person name="Bateman A."/>
            <person name="Brown S."/>
            <person name="Chandra G."/>
            <person name="Chen C.W."/>
            <person name="Collins M."/>
            <person name="Cronin A."/>
            <person name="Fraser A."/>
            <person name="Goble A."/>
            <person name="Hidalgo J."/>
            <person name="Hornsby T."/>
            <person name="Howarth S."/>
            <person name="Huang C.-H."/>
            <person name="Kieser T."/>
            <person name="Larke L."/>
            <person name="Murphy L.D."/>
            <person name="Oliver K."/>
            <person name="O'Neil S."/>
            <person name="Rabbinowitsch E."/>
            <person name="Rajandream M.A."/>
            <person name="Rutherford K.M."/>
            <person name="Rutter S."/>
            <person name="Seeger K."/>
            <person name="Saunders D."/>
            <person name="Sharp S."/>
            <person name="Squares R."/>
            <person name="Squares S."/>
            <person name="Taylor K."/>
            <person name="Warren T."/>
            <person name="Wietzorrek A."/>
            <person name="Woodward J.R."/>
            <person name="Barrell B.G."/>
            <person name="Parkhill J."/>
            <person name="Hopwood D.A."/>
        </authorList>
    </citation>
    <scope>NUCLEOTIDE SEQUENCE [LARGE SCALE GENOMIC DNA]</scope>
    <source>
        <strain>ATCC BAA-471 / A3(2) / M145</strain>
    </source>
</reference>
<sequence>MSAARGGRAGAVVTGVGTCLPETVVDNDEVSRHLDTDHAWIHSRTGIERRRRVSPGTTTGDLAVTAGAAALKSAGRDDCDLVLLATTTPDRRCPATAPRVASRLGLRAAAAFDLSAVCSGFVYGLSVASAMITAGTCDRALVIGADVYSSIVDPDDRGTAVVFGDGAGAVLLERGDTGDPGAVLHTELGSDGTGDELITIPPDGAYLTMRGSDVYTRAVTTMAESARSTAAHAGWDLADVDAFVGHQANLRILTSVAKRLRLPPERVVSNIADVANTAAASIPLALADAAAQGRIGSGDRLLLTAFGGGLTWGSAAVVWSGAEPVQDQRS</sequence>
<feature type="chain" id="PRO_0000110484" description="Beta-ketoacyl-[acyl-carrier-protein] synthase III 2">
    <location>
        <begin position="1"/>
        <end position="330"/>
    </location>
</feature>
<feature type="region of interest" description="ACP-binding" evidence="1">
    <location>
        <begin position="247"/>
        <end position="251"/>
    </location>
</feature>
<feature type="active site" evidence="1">
    <location>
        <position position="118"/>
    </location>
</feature>
<feature type="active site" evidence="1">
    <location>
        <position position="246"/>
    </location>
</feature>
<feature type="active site" evidence="1">
    <location>
        <position position="276"/>
    </location>
</feature>
<keyword id="KW-0012">Acyltransferase</keyword>
<keyword id="KW-0963">Cytoplasm</keyword>
<keyword id="KW-0275">Fatty acid biosynthesis</keyword>
<keyword id="KW-0276">Fatty acid metabolism</keyword>
<keyword id="KW-0444">Lipid biosynthesis</keyword>
<keyword id="KW-0443">Lipid metabolism</keyword>
<keyword id="KW-0511">Multifunctional enzyme</keyword>
<keyword id="KW-1185">Reference proteome</keyword>
<keyword id="KW-0808">Transferase</keyword>
<accession>Q9Z4Y5</accession>
<comment type="function">
    <text evidence="1">Catalyzes the condensation reaction of fatty acid synthesis by the addition to an acyl acceptor of two carbons from malonyl-ACP. Catalyzes the first condensation reaction which initiates fatty acid synthesis and may therefore play a role in governing the total rate of fatty acid production. Possesses both acetoacetyl-ACP synthase and acetyl transacylase activities. Its substrate specificity determines the biosynthesis of branched-chain and/or straight-chain of fatty acids.</text>
</comment>
<comment type="catalytic activity">
    <reaction evidence="1">
        <text>malonyl-[ACP] + acetyl-CoA + H(+) = 3-oxobutanoyl-[ACP] + CO2 + CoA</text>
        <dbReference type="Rhea" id="RHEA:12080"/>
        <dbReference type="Rhea" id="RHEA-COMP:9623"/>
        <dbReference type="Rhea" id="RHEA-COMP:9625"/>
        <dbReference type="ChEBI" id="CHEBI:15378"/>
        <dbReference type="ChEBI" id="CHEBI:16526"/>
        <dbReference type="ChEBI" id="CHEBI:57287"/>
        <dbReference type="ChEBI" id="CHEBI:57288"/>
        <dbReference type="ChEBI" id="CHEBI:78449"/>
        <dbReference type="ChEBI" id="CHEBI:78450"/>
        <dbReference type="EC" id="2.3.1.180"/>
    </reaction>
</comment>
<comment type="pathway">
    <text evidence="1">Lipid metabolism; fatty acid biosynthesis.</text>
</comment>
<comment type="subunit">
    <text evidence="1">Homodimer.</text>
</comment>
<comment type="subcellular location">
    <subcellularLocation>
        <location evidence="1">Cytoplasm</location>
    </subcellularLocation>
</comment>
<comment type="domain">
    <text evidence="1">The last Arg residue of the ACP-binding site is essential for the weak association between ACP/AcpP and FabH.</text>
</comment>
<comment type="similarity">
    <text evidence="1">Belongs to the thiolase-like superfamily. FabH family.</text>
</comment>
<gene>
    <name evidence="1" type="primary">fabH2</name>
    <name type="ordered locus">SCO3246</name>
    <name type="ORF">SCE29.15c</name>
</gene>
<evidence type="ECO:0000255" key="1">
    <source>
        <dbReference type="HAMAP-Rule" id="MF_01815"/>
    </source>
</evidence>
<protein>
    <recommendedName>
        <fullName evidence="1">Beta-ketoacyl-[acyl-carrier-protein] synthase III 2</fullName>
        <shortName evidence="1">Beta-ketoacyl-ACP synthase III 2</shortName>
        <shortName evidence="1">KAS III 2</shortName>
        <ecNumber evidence="1">2.3.1.180</ecNumber>
    </recommendedName>
    <alternativeName>
        <fullName evidence="1">3-oxoacyl-[acyl-carrier-protein] synthase 3 2</fullName>
    </alternativeName>
    <alternativeName>
        <fullName evidence="1">3-oxoacyl-[acyl-carrier-protein] synthase III 2</fullName>
    </alternativeName>
</protein>
<dbReference type="EC" id="2.3.1.180" evidence="1"/>
<dbReference type="EMBL" id="AL939115">
    <property type="protein sequence ID" value="CAB38890.1"/>
    <property type="molecule type" value="Genomic_DNA"/>
</dbReference>
<dbReference type="PIR" id="T36194">
    <property type="entry name" value="T36194"/>
</dbReference>
<dbReference type="RefSeq" id="NP_627458.1">
    <property type="nucleotide sequence ID" value="NC_003888.3"/>
</dbReference>
<dbReference type="RefSeq" id="WP_003975567.1">
    <property type="nucleotide sequence ID" value="NZ_VNID01000025.1"/>
</dbReference>
<dbReference type="SMR" id="Q9Z4Y5"/>
<dbReference type="STRING" id="100226.gene:17760864"/>
<dbReference type="PaxDb" id="100226-SCO3246"/>
<dbReference type="KEGG" id="sco:SCO3246"/>
<dbReference type="PATRIC" id="fig|100226.15.peg.3310"/>
<dbReference type="eggNOG" id="COG0332">
    <property type="taxonomic scope" value="Bacteria"/>
</dbReference>
<dbReference type="HOGENOM" id="CLU_039592_4_0_11"/>
<dbReference type="InParanoid" id="Q9Z4Y5"/>
<dbReference type="OrthoDB" id="9815506at2"/>
<dbReference type="PhylomeDB" id="Q9Z4Y5"/>
<dbReference type="UniPathway" id="UPA00094"/>
<dbReference type="Proteomes" id="UP000001973">
    <property type="component" value="Chromosome"/>
</dbReference>
<dbReference type="GO" id="GO:0005737">
    <property type="term" value="C:cytoplasm"/>
    <property type="evidence" value="ECO:0007669"/>
    <property type="project" value="UniProtKB-SubCell"/>
</dbReference>
<dbReference type="GO" id="GO:0004315">
    <property type="term" value="F:3-oxoacyl-[acyl-carrier-protein] synthase activity"/>
    <property type="evidence" value="ECO:0007669"/>
    <property type="project" value="InterPro"/>
</dbReference>
<dbReference type="GO" id="GO:0033818">
    <property type="term" value="F:beta-ketoacyl-acyl-carrier-protein synthase III activity"/>
    <property type="evidence" value="ECO:0007669"/>
    <property type="project" value="UniProtKB-UniRule"/>
</dbReference>
<dbReference type="GO" id="GO:0006633">
    <property type="term" value="P:fatty acid biosynthetic process"/>
    <property type="evidence" value="ECO:0007669"/>
    <property type="project" value="UniProtKB-UniRule"/>
</dbReference>
<dbReference type="GO" id="GO:0044550">
    <property type="term" value="P:secondary metabolite biosynthetic process"/>
    <property type="evidence" value="ECO:0000318"/>
    <property type="project" value="GO_Central"/>
</dbReference>
<dbReference type="CDD" id="cd00830">
    <property type="entry name" value="KAS_III"/>
    <property type="match status" value="1"/>
</dbReference>
<dbReference type="FunFam" id="3.40.47.10:FF:000004">
    <property type="entry name" value="3-oxoacyl-[acyl-carrier-protein] synthase 3"/>
    <property type="match status" value="1"/>
</dbReference>
<dbReference type="Gene3D" id="3.40.47.10">
    <property type="match status" value="1"/>
</dbReference>
<dbReference type="HAMAP" id="MF_01815">
    <property type="entry name" value="FabH"/>
    <property type="match status" value="1"/>
</dbReference>
<dbReference type="InterPro" id="IPR013747">
    <property type="entry name" value="ACP_syn_III_C"/>
</dbReference>
<dbReference type="InterPro" id="IPR013751">
    <property type="entry name" value="ACP_syn_III_N"/>
</dbReference>
<dbReference type="InterPro" id="IPR004655">
    <property type="entry name" value="FabH"/>
</dbReference>
<dbReference type="InterPro" id="IPR016039">
    <property type="entry name" value="Thiolase-like"/>
</dbReference>
<dbReference type="NCBIfam" id="TIGR00747">
    <property type="entry name" value="fabH"/>
    <property type="match status" value="1"/>
</dbReference>
<dbReference type="NCBIfam" id="NF006829">
    <property type="entry name" value="PRK09352.1"/>
    <property type="match status" value="1"/>
</dbReference>
<dbReference type="PANTHER" id="PTHR34069">
    <property type="entry name" value="3-OXOACYL-[ACYL-CARRIER-PROTEIN] SYNTHASE 3"/>
    <property type="match status" value="1"/>
</dbReference>
<dbReference type="PANTHER" id="PTHR34069:SF2">
    <property type="entry name" value="BETA-KETOACYL-[ACYL-CARRIER-PROTEIN] SYNTHASE III"/>
    <property type="match status" value="1"/>
</dbReference>
<dbReference type="Pfam" id="PF08545">
    <property type="entry name" value="ACP_syn_III"/>
    <property type="match status" value="1"/>
</dbReference>
<dbReference type="Pfam" id="PF08541">
    <property type="entry name" value="ACP_syn_III_C"/>
    <property type="match status" value="1"/>
</dbReference>
<dbReference type="SUPFAM" id="SSF53901">
    <property type="entry name" value="Thiolase-like"/>
    <property type="match status" value="1"/>
</dbReference>
<organism>
    <name type="scientific">Streptomyces coelicolor (strain ATCC BAA-471 / A3(2) / M145)</name>
    <dbReference type="NCBI Taxonomy" id="100226"/>
    <lineage>
        <taxon>Bacteria</taxon>
        <taxon>Bacillati</taxon>
        <taxon>Actinomycetota</taxon>
        <taxon>Actinomycetes</taxon>
        <taxon>Kitasatosporales</taxon>
        <taxon>Streptomycetaceae</taxon>
        <taxon>Streptomyces</taxon>
        <taxon>Streptomyces albidoflavus group</taxon>
    </lineage>
</organism>
<name>FABH2_STRCO</name>
<proteinExistence type="inferred from homology"/>